<accession>Q0HPF7</accession>
<name>ATPF_SHESR</name>
<protein>
    <recommendedName>
        <fullName evidence="1">ATP synthase subunit b</fullName>
    </recommendedName>
    <alternativeName>
        <fullName evidence="1">ATP synthase F(0) sector subunit b</fullName>
    </alternativeName>
    <alternativeName>
        <fullName evidence="1">ATPase subunit I</fullName>
    </alternativeName>
    <alternativeName>
        <fullName evidence="1">F-type ATPase subunit b</fullName>
        <shortName evidence="1">F-ATPase subunit b</shortName>
    </alternativeName>
</protein>
<evidence type="ECO:0000255" key="1">
    <source>
        <dbReference type="HAMAP-Rule" id="MF_01398"/>
    </source>
</evidence>
<proteinExistence type="inferred from homology"/>
<sequence length="156" mass="17339">MNFNATLIGQTVAFIIFVWFCMKFVWPPLMNAIEARQKRIADGLADADRAVKDLELAQAKATDQLKEAKVTANEIIEQANKRKAQIVEEAKAEADAERAKIIAQGKAEIEAERNRVKEDLRKQVATLAIMGAEKILERSIDPAAHSDIVNKLVAEI</sequence>
<reference key="1">
    <citation type="submission" date="2006-08" db="EMBL/GenBank/DDBJ databases">
        <title>Complete sequence of chromosome 1 of Shewanella sp. MR-7.</title>
        <authorList>
            <person name="Copeland A."/>
            <person name="Lucas S."/>
            <person name="Lapidus A."/>
            <person name="Barry K."/>
            <person name="Detter J.C."/>
            <person name="Glavina del Rio T."/>
            <person name="Hammon N."/>
            <person name="Israni S."/>
            <person name="Dalin E."/>
            <person name="Tice H."/>
            <person name="Pitluck S."/>
            <person name="Kiss H."/>
            <person name="Brettin T."/>
            <person name="Bruce D."/>
            <person name="Han C."/>
            <person name="Tapia R."/>
            <person name="Gilna P."/>
            <person name="Schmutz J."/>
            <person name="Larimer F."/>
            <person name="Land M."/>
            <person name="Hauser L."/>
            <person name="Kyrpides N."/>
            <person name="Mikhailova N."/>
            <person name="Nealson K."/>
            <person name="Konstantinidis K."/>
            <person name="Klappenbach J."/>
            <person name="Tiedje J."/>
            <person name="Richardson P."/>
        </authorList>
    </citation>
    <scope>NUCLEOTIDE SEQUENCE [LARGE SCALE GENOMIC DNA]</scope>
    <source>
        <strain>MR-7</strain>
    </source>
</reference>
<dbReference type="EMBL" id="CP000444">
    <property type="protein sequence ID" value="ABI44998.1"/>
    <property type="molecule type" value="Genomic_DNA"/>
</dbReference>
<dbReference type="SMR" id="Q0HPF7"/>
<dbReference type="KEGG" id="shm:Shewmr7_4021"/>
<dbReference type="HOGENOM" id="CLU_079215_4_5_6"/>
<dbReference type="GO" id="GO:0005886">
    <property type="term" value="C:plasma membrane"/>
    <property type="evidence" value="ECO:0007669"/>
    <property type="project" value="UniProtKB-SubCell"/>
</dbReference>
<dbReference type="GO" id="GO:0045259">
    <property type="term" value="C:proton-transporting ATP synthase complex"/>
    <property type="evidence" value="ECO:0007669"/>
    <property type="project" value="UniProtKB-KW"/>
</dbReference>
<dbReference type="GO" id="GO:0046933">
    <property type="term" value="F:proton-transporting ATP synthase activity, rotational mechanism"/>
    <property type="evidence" value="ECO:0007669"/>
    <property type="project" value="UniProtKB-UniRule"/>
</dbReference>
<dbReference type="GO" id="GO:0046961">
    <property type="term" value="F:proton-transporting ATPase activity, rotational mechanism"/>
    <property type="evidence" value="ECO:0007669"/>
    <property type="project" value="TreeGrafter"/>
</dbReference>
<dbReference type="CDD" id="cd06503">
    <property type="entry name" value="ATP-synt_Fo_b"/>
    <property type="match status" value="1"/>
</dbReference>
<dbReference type="FunFam" id="1.20.5.620:FF:000001">
    <property type="entry name" value="ATP synthase subunit b"/>
    <property type="match status" value="1"/>
</dbReference>
<dbReference type="Gene3D" id="1.20.5.620">
    <property type="entry name" value="F1F0 ATP synthase subunit B, membrane domain"/>
    <property type="match status" value="1"/>
</dbReference>
<dbReference type="HAMAP" id="MF_01398">
    <property type="entry name" value="ATP_synth_b_bprime"/>
    <property type="match status" value="1"/>
</dbReference>
<dbReference type="InterPro" id="IPR028987">
    <property type="entry name" value="ATP_synth_B-like_membr_sf"/>
</dbReference>
<dbReference type="InterPro" id="IPR002146">
    <property type="entry name" value="ATP_synth_b/b'su_bac/chlpt"/>
</dbReference>
<dbReference type="InterPro" id="IPR005864">
    <property type="entry name" value="ATP_synth_F0_bsu_bac"/>
</dbReference>
<dbReference type="InterPro" id="IPR050059">
    <property type="entry name" value="ATP_synthase_B_chain"/>
</dbReference>
<dbReference type="NCBIfam" id="TIGR01144">
    <property type="entry name" value="ATP_synt_b"/>
    <property type="match status" value="1"/>
</dbReference>
<dbReference type="NCBIfam" id="NF004411">
    <property type="entry name" value="PRK05759.1-2"/>
    <property type="match status" value="1"/>
</dbReference>
<dbReference type="NCBIfam" id="NF004413">
    <property type="entry name" value="PRK05759.1-4"/>
    <property type="match status" value="1"/>
</dbReference>
<dbReference type="PANTHER" id="PTHR33445:SF1">
    <property type="entry name" value="ATP SYNTHASE SUBUNIT B"/>
    <property type="match status" value="1"/>
</dbReference>
<dbReference type="PANTHER" id="PTHR33445">
    <property type="entry name" value="ATP SYNTHASE SUBUNIT B', CHLOROPLASTIC"/>
    <property type="match status" value="1"/>
</dbReference>
<dbReference type="Pfam" id="PF00430">
    <property type="entry name" value="ATP-synt_B"/>
    <property type="match status" value="1"/>
</dbReference>
<dbReference type="SUPFAM" id="SSF81573">
    <property type="entry name" value="F1F0 ATP synthase subunit B, membrane domain"/>
    <property type="match status" value="1"/>
</dbReference>
<feature type="chain" id="PRO_0000368767" description="ATP synthase subunit b">
    <location>
        <begin position="1"/>
        <end position="156"/>
    </location>
</feature>
<feature type="transmembrane region" description="Helical" evidence="1">
    <location>
        <begin position="7"/>
        <end position="27"/>
    </location>
</feature>
<organism>
    <name type="scientific">Shewanella sp. (strain MR-7)</name>
    <dbReference type="NCBI Taxonomy" id="60481"/>
    <lineage>
        <taxon>Bacteria</taxon>
        <taxon>Pseudomonadati</taxon>
        <taxon>Pseudomonadota</taxon>
        <taxon>Gammaproteobacteria</taxon>
        <taxon>Alteromonadales</taxon>
        <taxon>Shewanellaceae</taxon>
        <taxon>Shewanella</taxon>
    </lineage>
</organism>
<comment type="function">
    <text evidence="1">F(1)F(0) ATP synthase produces ATP from ADP in the presence of a proton or sodium gradient. F-type ATPases consist of two structural domains, F(1) containing the extramembraneous catalytic core and F(0) containing the membrane proton channel, linked together by a central stalk and a peripheral stalk. During catalysis, ATP synthesis in the catalytic domain of F(1) is coupled via a rotary mechanism of the central stalk subunits to proton translocation.</text>
</comment>
<comment type="function">
    <text evidence="1">Component of the F(0) channel, it forms part of the peripheral stalk, linking F(1) to F(0).</text>
</comment>
<comment type="subunit">
    <text evidence="1">F-type ATPases have 2 components, F(1) - the catalytic core - and F(0) - the membrane proton channel. F(1) has five subunits: alpha(3), beta(3), gamma(1), delta(1), epsilon(1). F(0) has three main subunits: a(1), b(2) and c(10-14). The alpha and beta chains form an alternating ring which encloses part of the gamma chain. F(1) is attached to F(0) by a central stalk formed by the gamma and epsilon chains, while a peripheral stalk is formed by the delta and b chains.</text>
</comment>
<comment type="subcellular location">
    <subcellularLocation>
        <location evidence="1">Cell inner membrane</location>
        <topology evidence="1">Single-pass membrane protein</topology>
    </subcellularLocation>
</comment>
<comment type="similarity">
    <text evidence="1">Belongs to the ATPase B chain family.</text>
</comment>
<gene>
    <name evidence="1" type="primary">atpF</name>
    <name type="ordered locus">Shewmr7_4021</name>
</gene>
<keyword id="KW-0066">ATP synthesis</keyword>
<keyword id="KW-0997">Cell inner membrane</keyword>
<keyword id="KW-1003">Cell membrane</keyword>
<keyword id="KW-0138">CF(0)</keyword>
<keyword id="KW-0375">Hydrogen ion transport</keyword>
<keyword id="KW-0406">Ion transport</keyword>
<keyword id="KW-0472">Membrane</keyword>
<keyword id="KW-0812">Transmembrane</keyword>
<keyword id="KW-1133">Transmembrane helix</keyword>
<keyword id="KW-0813">Transport</keyword>